<dbReference type="EMBL" id="AAHF01000002">
    <property type="protein sequence ID" value="EAL92767.1"/>
    <property type="status" value="ALT_SEQ"/>
    <property type="molecule type" value="Genomic_DNA"/>
</dbReference>
<dbReference type="RefSeq" id="XP_754805.1">
    <property type="nucleotide sequence ID" value="XM_749712.1"/>
</dbReference>
<dbReference type="SMR" id="Q4WX36"/>
<dbReference type="FunCoup" id="Q4WX36">
    <property type="interactions" value="1175"/>
</dbReference>
<dbReference type="STRING" id="330879.Q4WX36"/>
<dbReference type="GeneID" id="3512388"/>
<dbReference type="KEGG" id="afm:AFUA_3G08090"/>
<dbReference type="eggNOG" id="KOG3163">
    <property type="taxonomic scope" value="Eukaryota"/>
</dbReference>
<dbReference type="HOGENOM" id="CLU_1070048_0_0_1"/>
<dbReference type="InParanoid" id="Q4WX36"/>
<dbReference type="OrthoDB" id="1847590at2759"/>
<dbReference type="Proteomes" id="UP000002530">
    <property type="component" value="Chromosome 3"/>
</dbReference>
<dbReference type="GO" id="GO:0005730">
    <property type="term" value="C:nucleolus"/>
    <property type="evidence" value="ECO:0007669"/>
    <property type="project" value="UniProtKB-SubCell"/>
</dbReference>
<dbReference type="GO" id="GO:0030687">
    <property type="term" value="C:preribosome, large subunit precursor"/>
    <property type="evidence" value="ECO:0000318"/>
    <property type="project" value="GO_Central"/>
</dbReference>
<dbReference type="GO" id="GO:0000460">
    <property type="term" value="P:maturation of 5.8S rRNA"/>
    <property type="evidence" value="ECO:0000318"/>
    <property type="project" value="GO_Central"/>
</dbReference>
<dbReference type="GO" id="GO:0000470">
    <property type="term" value="P:maturation of LSU-rRNA"/>
    <property type="evidence" value="ECO:0000318"/>
    <property type="project" value="GO_Central"/>
</dbReference>
<dbReference type="CDD" id="cd11381">
    <property type="entry name" value="NSA2"/>
    <property type="match status" value="1"/>
</dbReference>
<dbReference type="FunFam" id="2.40.10.310:FF:000001">
    <property type="entry name" value="NSA2, ribosome biogenesis homolog"/>
    <property type="match status" value="1"/>
</dbReference>
<dbReference type="Gene3D" id="2.40.10.310">
    <property type="match status" value="1"/>
</dbReference>
<dbReference type="InterPro" id="IPR039411">
    <property type="entry name" value="NSA2_fam"/>
</dbReference>
<dbReference type="InterPro" id="IPR022309">
    <property type="entry name" value="Ribosomal_Se8/biogenesis_NSA2"/>
</dbReference>
<dbReference type="PANTHER" id="PTHR12642">
    <property type="entry name" value="RIBOSOME BIOGENESIS PROTEIN NSA2 HOMOLOG"/>
    <property type="match status" value="1"/>
</dbReference>
<dbReference type="Pfam" id="PF01201">
    <property type="entry name" value="Ribosomal_S8e"/>
    <property type="match status" value="1"/>
</dbReference>
<sequence>MPHAKFSRVKITEPVLTASEYSLRTSSYIERWQKQHGKRLDHDERVRKRQARESHKQSQDAQNLRGLRAKLYQQKRHAEKIQMRKRIKAQEEKNVKSSAPDEPSKTPLPQYLLDRSQATNAKALSSAIKDKRAEKAAKFAVPLPKVKGISEEEMFKVVNTGKKTHKKSWKRMITKPTFVGSDFTRRPVKYERFIRPMGLRYKKANVTHPELGVTVQLPILGVKKNPQNPLYTQLGVLTKGTIIEVNVSELGLVTTSGKVVWGKYAQITNTPENDGTVNAVLLV</sequence>
<protein>
    <recommendedName>
        <fullName>Ribosome biogenesis protein nsa2</fullName>
    </recommendedName>
</protein>
<comment type="function">
    <text evidence="1">Involved in the biogenesis of the 60S ribosomal subunit. May play a part in the quality control of pre-60S particles (By similarity).</text>
</comment>
<comment type="subunit">
    <text evidence="2">Component of the pre-66S ribosomal particle. Interacts with nop7 and rrp1. Interacts with rsa4 (via WD repeats).</text>
</comment>
<comment type="subcellular location">
    <subcellularLocation>
        <location evidence="1">Nucleus</location>
        <location evidence="1">Nucleolus</location>
    </subcellularLocation>
</comment>
<comment type="similarity">
    <text evidence="5">Belongs to the eukaryotic ribosomal protein eS8 family. Ribosome biogenesis protein NSA2 subfamily.</text>
</comment>
<comment type="sequence caution" evidence="5">
    <conflict type="erroneous gene model prediction">
        <sequence resource="EMBL-CDS" id="EAL92767"/>
    </conflict>
</comment>
<reference key="1">
    <citation type="journal article" date="2005" name="Nature">
        <title>Genomic sequence of the pathogenic and allergenic filamentous fungus Aspergillus fumigatus.</title>
        <authorList>
            <person name="Nierman W.C."/>
            <person name="Pain A."/>
            <person name="Anderson M.J."/>
            <person name="Wortman J.R."/>
            <person name="Kim H.S."/>
            <person name="Arroyo J."/>
            <person name="Berriman M."/>
            <person name="Abe K."/>
            <person name="Archer D.B."/>
            <person name="Bermejo C."/>
            <person name="Bennett J.W."/>
            <person name="Bowyer P."/>
            <person name="Chen D."/>
            <person name="Collins M."/>
            <person name="Coulsen R."/>
            <person name="Davies R."/>
            <person name="Dyer P.S."/>
            <person name="Farman M.L."/>
            <person name="Fedorova N."/>
            <person name="Fedorova N.D."/>
            <person name="Feldblyum T.V."/>
            <person name="Fischer R."/>
            <person name="Fosker N."/>
            <person name="Fraser A."/>
            <person name="Garcia J.L."/>
            <person name="Garcia M.J."/>
            <person name="Goble A."/>
            <person name="Goldman G.H."/>
            <person name="Gomi K."/>
            <person name="Griffith-Jones S."/>
            <person name="Gwilliam R."/>
            <person name="Haas B.J."/>
            <person name="Haas H."/>
            <person name="Harris D.E."/>
            <person name="Horiuchi H."/>
            <person name="Huang J."/>
            <person name="Humphray S."/>
            <person name="Jimenez J."/>
            <person name="Keller N."/>
            <person name="Khouri H."/>
            <person name="Kitamoto K."/>
            <person name="Kobayashi T."/>
            <person name="Konzack S."/>
            <person name="Kulkarni R."/>
            <person name="Kumagai T."/>
            <person name="Lafton A."/>
            <person name="Latge J.-P."/>
            <person name="Li W."/>
            <person name="Lord A."/>
            <person name="Lu C."/>
            <person name="Majoros W.H."/>
            <person name="May G.S."/>
            <person name="Miller B.L."/>
            <person name="Mohamoud Y."/>
            <person name="Molina M."/>
            <person name="Monod M."/>
            <person name="Mouyna I."/>
            <person name="Mulligan S."/>
            <person name="Murphy L.D."/>
            <person name="O'Neil S."/>
            <person name="Paulsen I."/>
            <person name="Penalva M.A."/>
            <person name="Pertea M."/>
            <person name="Price C."/>
            <person name="Pritchard B.L."/>
            <person name="Quail M.A."/>
            <person name="Rabbinowitsch E."/>
            <person name="Rawlins N."/>
            <person name="Rajandream M.A."/>
            <person name="Reichard U."/>
            <person name="Renauld H."/>
            <person name="Robson G.D."/>
            <person name="Rodriguez de Cordoba S."/>
            <person name="Rodriguez-Pena J.M."/>
            <person name="Ronning C.M."/>
            <person name="Rutter S."/>
            <person name="Salzberg S.L."/>
            <person name="Sanchez M."/>
            <person name="Sanchez-Ferrero J.C."/>
            <person name="Saunders D."/>
            <person name="Seeger K."/>
            <person name="Squares R."/>
            <person name="Squares S."/>
            <person name="Takeuchi M."/>
            <person name="Tekaia F."/>
            <person name="Turner G."/>
            <person name="Vazquez de Aldana C.R."/>
            <person name="Weidman J."/>
            <person name="White O."/>
            <person name="Woodward J.R."/>
            <person name="Yu J.-H."/>
            <person name="Fraser C.M."/>
            <person name="Galagan J.E."/>
            <person name="Asai K."/>
            <person name="Machida M."/>
            <person name="Hall N."/>
            <person name="Barrell B.G."/>
            <person name="Denning D.W."/>
        </authorList>
    </citation>
    <scope>NUCLEOTIDE SEQUENCE [LARGE SCALE GENOMIC DNA]</scope>
    <source>
        <strain>ATCC MYA-4609 / CBS 101355 / FGSC A1100 / Af293</strain>
    </source>
</reference>
<name>NSA2_ASPFU</name>
<keyword id="KW-0539">Nucleus</keyword>
<keyword id="KW-1185">Reference proteome</keyword>
<keyword id="KW-0687">Ribonucleoprotein</keyword>
<keyword id="KW-0690">Ribosome biogenesis</keyword>
<keyword id="KW-0698">rRNA processing</keyword>
<feature type="chain" id="PRO_0000320410" description="Ribosome biogenesis protein nsa2">
    <location>
        <begin position="1"/>
        <end position="283"/>
    </location>
</feature>
<feature type="region of interest" description="Disordered" evidence="4">
    <location>
        <begin position="31"/>
        <end position="109"/>
    </location>
</feature>
<feature type="short sequence motif" description="Nuclear localization signal 1" evidence="3">
    <location>
        <begin position="37"/>
        <end position="44"/>
    </location>
</feature>
<feature type="short sequence motif" description="Nuclear localization signal 2" evidence="3">
    <location>
        <begin position="74"/>
        <end position="81"/>
    </location>
</feature>
<feature type="compositionally biased region" description="Basic and acidic residues" evidence="4">
    <location>
        <begin position="38"/>
        <end position="58"/>
    </location>
</feature>
<feature type="compositionally biased region" description="Basic residues" evidence="4">
    <location>
        <begin position="73"/>
        <end position="87"/>
    </location>
</feature>
<gene>
    <name type="primary">nsa2</name>
    <name type="ORF">AFUA_3G08090</name>
</gene>
<proteinExistence type="inferred from homology"/>
<accession>Q4WX36</accession>
<organism>
    <name type="scientific">Aspergillus fumigatus (strain ATCC MYA-4609 / CBS 101355 / FGSC A1100 / Af293)</name>
    <name type="common">Neosartorya fumigata</name>
    <dbReference type="NCBI Taxonomy" id="330879"/>
    <lineage>
        <taxon>Eukaryota</taxon>
        <taxon>Fungi</taxon>
        <taxon>Dikarya</taxon>
        <taxon>Ascomycota</taxon>
        <taxon>Pezizomycotina</taxon>
        <taxon>Eurotiomycetes</taxon>
        <taxon>Eurotiomycetidae</taxon>
        <taxon>Eurotiales</taxon>
        <taxon>Aspergillaceae</taxon>
        <taxon>Aspergillus</taxon>
        <taxon>Aspergillus subgen. Fumigati</taxon>
    </lineage>
</organism>
<evidence type="ECO:0000250" key="1"/>
<evidence type="ECO:0000250" key="2">
    <source>
        <dbReference type="UniProtKB" id="P40078"/>
    </source>
</evidence>
<evidence type="ECO:0000255" key="3">
    <source>
        <dbReference type="PROSITE-ProRule" id="PRU00768"/>
    </source>
</evidence>
<evidence type="ECO:0000256" key="4">
    <source>
        <dbReference type="SAM" id="MobiDB-lite"/>
    </source>
</evidence>
<evidence type="ECO:0000305" key="5"/>